<dbReference type="EC" id="7.1.2.2" evidence="1"/>
<dbReference type="EMBL" id="AE017244">
    <property type="protein sequence ID" value="AAZ53428.2"/>
    <property type="molecule type" value="Genomic_DNA"/>
</dbReference>
<dbReference type="RefSeq" id="WP_014579553.1">
    <property type="nucleotide sequence ID" value="NC_007332.1"/>
</dbReference>
<dbReference type="SMR" id="Q4A8W1"/>
<dbReference type="KEGG" id="mhp:MHP7448_0051"/>
<dbReference type="HOGENOM" id="CLU_010091_2_1_14"/>
<dbReference type="Proteomes" id="UP000000553">
    <property type="component" value="Chromosome"/>
</dbReference>
<dbReference type="GO" id="GO:0005886">
    <property type="term" value="C:plasma membrane"/>
    <property type="evidence" value="ECO:0007669"/>
    <property type="project" value="UniProtKB-SubCell"/>
</dbReference>
<dbReference type="GO" id="GO:0045259">
    <property type="term" value="C:proton-transporting ATP synthase complex"/>
    <property type="evidence" value="ECO:0007669"/>
    <property type="project" value="UniProtKB-KW"/>
</dbReference>
<dbReference type="GO" id="GO:0043531">
    <property type="term" value="F:ADP binding"/>
    <property type="evidence" value="ECO:0007669"/>
    <property type="project" value="TreeGrafter"/>
</dbReference>
<dbReference type="GO" id="GO:0005524">
    <property type="term" value="F:ATP binding"/>
    <property type="evidence" value="ECO:0007669"/>
    <property type="project" value="UniProtKB-UniRule"/>
</dbReference>
<dbReference type="GO" id="GO:0046933">
    <property type="term" value="F:proton-transporting ATP synthase activity, rotational mechanism"/>
    <property type="evidence" value="ECO:0007669"/>
    <property type="project" value="UniProtKB-UniRule"/>
</dbReference>
<dbReference type="CDD" id="cd18113">
    <property type="entry name" value="ATP-synt_F1_alpha_C"/>
    <property type="match status" value="1"/>
</dbReference>
<dbReference type="CDD" id="cd18116">
    <property type="entry name" value="ATP-synt_F1_alpha_N"/>
    <property type="match status" value="1"/>
</dbReference>
<dbReference type="CDD" id="cd01132">
    <property type="entry name" value="F1-ATPase_alpha_CD"/>
    <property type="match status" value="1"/>
</dbReference>
<dbReference type="FunFam" id="3.40.50.300:FF:000002">
    <property type="entry name" value="ATP synthase subunit alpha"/>
    <property type="match status" value="1"/>
</dbReference>
<dbReference type="Gene3D" id="2.40.30.20">
    <property type="match status" value="1"/>
</dbReference>
<dbReference type="Gene3D" id="1.20.150.20">
    <property type="entry name" value="ATP synthase alpha/beta chain, C-terminal domain"/>
    <property type="match status" value="1"/>
</dbReference>
<dbReference type="Gene3D" id="3.40.50.300">
    <property type="entry name" value="P-loop containing nucleotide triphosphate hydrolases"/>
    <property type="match status" value="1"/>
</dbReference>
<dbReference type="HAMAP" id="MF_01346">
    <property type="entry name" value="ATP_synth_alpha_bact"/>
    <property type="match status" value="1"/>
</dbReference>
<dbReference type="InterPro" id="IPR023366">
    <property type="entry name" value="ATP_synth_asu-like_sf"/>
</dbReference>
<dbReference type="InterPro" id="IPR000793">
    <property type="entry name" value="ATP_synth_asu_C"/>
</dbReference>
<dbReference type="InterPro" id="IPR038376">
    <property type="entry name" value="ATP_synth_asu_C_sf"/>
</dbReference>
<dbReference type="InterPro" id="IPR033732">
    <property type="entry name" value="ATP_synth_F1_a_nt-bd_dom"/>
</dbReference>
<dbReference type="InterPro" id="IPR005294">
    <property type="entry name" value="ATP_synth_F1_asu"/>
</dbReference>
<dbReference type="InterPro" id="IPR020003">
    <property type="entry name" value="ATPase_a/bsu_AS"/>
</dbReference>
<dbReference type="InterPro" id="IPR004100">
    <property type="entry name" value="ATPase_F1/V1/A1_a/bsu_N"/>
</dbReference>
<dbReference type="InterPro" id="IPR036121">
    <property type="entry name" value="ATPase_F1/V1/A1_a/bsu_N_sf"/>
</dbReference>
<dbReference type="InterPro" id="IPR000194">
    <property type="entry name" value="ATPase_F1/V1/A1_a/bsu_nucl-bd"/>
</dbReference>
<dbReference type="InterPro" id="IPR027417">
    <property type="entry name" value="P-loop_NTPase"/>
</dbReference>
<dbReference type="NCBIfam" id="TIGR00962">
    <property type="entry name" value="atpA"/>
    <property type="match status" value="1"/>
</dbReference>
<dbReference type="NCBIfam" id="NF009884">
    <property type="entry name" value="PRK13343.1"/>
    <property type="match status" value="1"/>
</dbReference>
<dbReference type="PANTHER" id="PTHR48082">
    <property type="entry name" value="ATP SYNTHASE SUBUNIT ALPHA, MITOCHONDRIAL"/>
    <property type="match status" value="1"/>
</dbReference>
<dbReference type="PANTHER" id="PTHR48082:SF2">
    <property type="entry name" value="ATP SYNTHASE SUBUNIT ALPHA, MITOCHONDRIAL"/>
    <property type="match status" value="1"/>
</dbReference>
<dbReference type="Pfam" id="PF00006">
    <property type="entry name" value="ATP-synt_ab"/>
    <property type="match status" value="1"/>
</dbReference>
<dbReference type="Pfam" id="PF00306">
    <property type="entry name" value="ATP-synt_ab_C"/>
    <property type="match status" value="1"/>
</dbReference>
<dbReference type="Pfam" id="PF02874">
    <property type="entry name" value="ATP-synt_ab_N"/>
    <property type="match status" value="1"/>
</dbReference>
<dbReference type="SUPFAM" id="SSF47917">
    <property type="entry name" value="C-terminal domain of alpha and beta subunits of F1 ATP synthase"/>
    <property type="match status" value="1"/>
</dbReference>
<dbReference type="SUPFAM" id="SSF50615">
    <property type="entry name" value="N-terminal domain of alpha and beta subunits of F1 ATP synthase"/>
    <property type="match status" value="1"/>
</dbReference>
<dbReference type="SUPFAM" id="SSF52540">
    <property type="entry name" value="P-loop containing nucleoside triphosphate hydrolases"/>
    <property type="match status" value="1"/>
</dbReference>
<dbReference type="PROSITE" id="PS00152">
    <property type="entry name" value="ATPASE_ALPHA_BETA"/>
    <property type="match status" value="1"/>
</dbReference>
<proteinExistence type="inferred from homology"/>
<sequence length="507" mass="55699">MNKDINIAAIIKNEIENFEGKIQNHDIGKVIIVGDGVALVSGIEKVKFGELVEFENNVLGIALNLEQDLIGVVIMASENSVFQGSIVRRTKSVISITVGDQLLGRVVNALGIPIDGKAELDNSLKSAIFTNAPSIMDRKSVDRGLKTGILAIDSLVPIGKGQRELIIGDRQTGKTTIAIDAILNQKGKNVYCVYVAIGQKNSSVAQIVSLLEKKGALEYTTVILAGASELSPLQYLAPYSGAAIAEYWMNKKKDVLIIYDDLSKHAIAYRTLSLLLRRPPGREAFPGDIFYQHSYLLERSAQLSNDKGGGSITALPIIETQAGDISAYIPTNVISITDGQIFLRDSLFNSGQKPAIDIGLSVSRVGSAAQTNLMKWASSSLKLNLAQYNELKAFAQFGSDLGPSSQLILDRGNKIYEILKQENQYPLTERQQIMLLILIRENLIDSLEQKSIPLFKSAFLKYCDSEPKFRDKIEKMDYNRVLEPNNLAGILKDITDFIEKFNLGNVF</sequence>
<evidence type="ECO:0000255" key="1">
    <source>
        <dbReference type="HAMAP-Rule" id="MF_01346"/>
    </source>
</evidence>
<accession>Q4A8W1</accession>
<reference key="1">
    <citation type="journal article" date="2005" name="J. Bacteriol.">
        <title>Swine and poultry pathogens: the complete genome sequences of two strains of Mycoplasma hyopneumoniae and a strain of Mycoplasma synoviae.</title>
        <authorList>
            <person name="Vasconcelos A.T.R."/>
            <person name="Ferreira H.B."/>
            <person name="Bizarro C.V."/>
            <person name="Bonatto S.L."/>
            <person name="Carvalho M.O."/>
            <person name="Pinto P.M."/>
            <person name="Almeida D.F."/>
            <person name="Almeida L.G.P."/>
            <person name="Almeida R."/>
            <person name="Alves-Junior L."/>
            <person name="Assuncao E.N."/>
            <person name="Azevedo V.A.C."/>
            <person name="Bogo M.R."/>
            <person name="Brigido M.M."/>
            <person name="Brocchi M."/>
            <person name="Burity H.A."/>
            <person name="Camargo A.A."/>
            <person name="Camargo S.S."/>
            <person name="Carepo M.S."/>
            <person name="Carraro D.M."/>
            <person name="de Mattos Cascardo J.C."/>
            <person name="Castro L.A."/>
            <person name="Cavalcanti G."/>
            <person name="Chemale G."/>
            <person name="Collevatti R.G."/>
            <person name="Cunha C.W."/>
            <person name="Dallagiovanna B."/>
            <person name="Dambros B.P."/>
            <person name="Dellagostin O.A."/>
            <person name="Falcao C."/>
            <person name="Fantinatti-Garboggini F."/>
            <person name="Felipe M.S.S."/>
            <person name="Fiorentin L."/>
            <person name="Franco G.R."/>
            <person name="Freitas N.S.A."/>
            <person name="Frias D."/>
            <person name="Grangeiro T.B."/>
            <person name="Grisard E.C."/>
            <person name="Guimaraes C.T."/>
            <person name="Hungria M."/>
            <person name="Jardim S.N."/>
            <person name="Krieger M.A."/>
            <person name="Laurino J.P."/>
            <person name="Lima L.F.A."/>
            <person name="Lopes M.I."/>
            <person name="Loreto E.L.S."/>
            <person name="Madeira H.M.F."/>
            <person name="Manfio G.P."/>
            <person name="Maranhao A.Q."/>
            <person name="Martinkovics C.T."/>
            <person name="Medeiros S.R.B."/>
            <person name="Moreira M.A.M."/>
            <person name="Neiva M."/>
            <person name="Ramalho-Neto C.E."/>
            <person name="Nicolas M.F."/>
            <person name="Oliveira S.C."/>
            <person name="Paixao R.F.C."/>
            <person name="Pedrosa F.O."/>
            <person name="Pena S.D.J."/>
            <person name="Pereira M."/>
            <person name="Pereira-Ferrari L."/>
            <person name="Piffer I."/>
            <person name="Pinto L.S."/>
            <person name="Potrich D.P."/>
            <person name="Salim A.C.M."/>
            <person name="Santos F.R."/>
            <person name="Schmitt R."/>
            <person name="Schneider M.P.C."/>
            <person name="Schrank A."/>
            <person name="Schrank I.S."/>
            <person name="Schuck A.F."/>
            <person name="Seuanez H.N."/>
            <person name="Silva D.W."/>
            <person name="Silva R."/>
            <person name="Silva S.C."/>
            <person name="Soares C.M.A."/>
            <person name="Souza K.R.L."/>
            <person name="Souza R.C."/>
            <person name="Staats C.C."/>
            <person name="Steffens M.B.R."/>
            <person name="Teixeira S.M.R."/>
            <person name="Urmenyi T.P."/>
            <person name="Vainstein M.H."/>
            <person name="Zuccherato L.W."/>
            <person name="Simpson A.J.G."/>
            <person name="Zaha A."/>
        </authorList>
    </citation>
    <scope>NUCLEOTIDE SEQUENCE [LARGE SCALE GENOMIC DNA]</scope>
    <source>
        <strain>7448</strain>
    </source>
</reference>
<gene>
    <name evidence="1" type="primary">atpA</name>
    <name type="ordered locus">MHP7448_0051</name>
</gene>
<feature type="chain" id="PRO_0000238292" description="ATP synthase subunit alpha">
    <location>
        <begin position="1"/>
        <end position="507"/>
    </location>
</feature>
<feature type="binding site" evidence="1">
    <location>
        <begin position="168"/>
        <end position="175"/>
    </location>
    <ligand>
        <name>ATP</name>
        <dbReference type="ChEBI" id="CHEBI:30616"/>
    </ligand>
</feature>
<feature type="site" description="Required for activity" evidence="1">
    <location>
        <position position="361"/>
    </location>
</feature>
<organism>
    <name type="scientific">Mesomycoplasma hyopneumoniae (strain 7448)</name>
    <name type="common">Mycoplasma hyopneumoniae</name>
    <dbReference type="NCBI Taxonomy" id="262722"/>
    <lineage>
        <taxon>Bacteria</taxon>
        <taxon>Bacillati</taxon>
        <taxon>Mycoplasmatota</taxon>
        <taxon>Mycoplasmoidales</taxon>
        <taxon>Metamycoplasmataceae</taxon>
        <taxon>Mesomycoplasma</taxon>
    </lineage>
</organism>
<protein>
    <recommendedName>
        <fullName evidence="1">ATP synthase subunit alpha</fullName>
        <ecNumber evidence="1">7.1.2.2</ecNumber>
    </recommendedName>
    <alternativeName>
        <fullName evidence="1">ATP synthase F1 sector subunit alpha</fullName>
    </alternativeName>
    <alternativeName>
        <fullName evidence="1">F-ATPase subunit alpha</fullName>
    </alternativeName>
</protein>
<name>ATPA_MESH7</name>
<keyword id="KW-0066">ATP synthesis</keyword>
<keyword id="KW-0067">ATP-binding</keyword>
<keyword id="KW-1003">Cell membrane</keyword>
<keyword id="KW-0139">CF(1)</keyword>
<keyword id="KW-0375">Hydrogen ion transport</keyword>
<keyword id="KW-0406">Ion transport</keyword>
<keyword id="KW-0472">Membrane</keyword>
<keyword id="KW-0547">Nucleotide-binding</keyword>
<keyword id="KW-1278">Translocase</keyword>
<keyword id="KW-0813">Transport</keyword>
<comment type="function">
    <text evidence="1">Produces ATP from ADP in the presence of a proton gradient across the membrane. The alpha chain is a regulatory subunit.</text>
</comment>
<comment type="catalytic activity">
    <reaction evidence="1">
        <text>ATP + H2O + 4 H(+)(in) = ADP + phosphate + 5 H(+)(out)</text>
        <dbReference type="Rhea" id="RHEA:57720"/>
        <dbReference type="ChEBI" id="CHEBI:15377"/>
        <dbReference type="ChEBI" id="CHEBI:15378"/>
        <dbReference type="ChEBI" id="CHEBI:30616"/>
        <dbReference type="ChEBI" id="CHEBI:43474"/>
        <dbReference type="ChEBI" id="CHEBI:456216"/>
        <dbReference type="EC" id="7.1.2.2"/>
    </reaction>
</comment>
<comment type="subunit">
    <text evidence="1">F-type ATPases have 2 components, CF(1) - the catalytic core - and CF(0) - the membrane proton channel. CF(1) has five subunits: alpha(3), beta(3), gamma(1), delta(1), epsilon(1). CF(0) has three main subunits: a(1), b(2) and c(9-12). The alpha and beta chains form an alternating ring which encloses part of the gamma chain. CF(1) is attached to CF(0) by a central stalk formed by the gamma and epsilon chains, while a peripheral stalk is formed by the delta and b chains.</text>
</comment>
<comment type="subcellular location">
    <subcellularLocation>
        <location evidence="1">Cell membrane</location>
        <topology evidence="1">Peripheral membrane protein</topology>
    </subcellularLocation>
</comment>
<comment type="similarity">
    <text evidence="1">Belongs to the ATPase alpha/beta chains family.</text>
</comment>